<evidence type="ECO:0000255" key="1">
    <source>
        <dbReference type="HAMAP-Rule" id="MF_00087"/>
    </source>
</evidence>
<dbReference type="EC" id="1.2.1.70" evidence="1"/>
<dbReference type="EMBL" id="CU928158">
    <property type="protein sequence ID" value="CAQ89266.1"/>
    <property type="molecule type" value="Genomic_DNA"/>
</dbReference>
<dbReference type="RefSeq" id="WP_002432222.1">
    <property type="nucleotide sequence ID" value="NC_011740.1"/>
</dbReference>
<dbReference type="SMR" id="B7LSI0"/>
<dbReference type="GeneID" id="75057212"/>
<dbReference type="KEGG" id="efe:EFER_1751"/>
<dbReference type="HOGENOM" id="CLU_035113_2_2_6"/>
<dbReference type="OrthoDB" id="110209at2"/>
<dbReference type="UniPathway" id="UPA00251">
    <property type="reaction ID" value="UER00316"/>
</dbReference>
<dbReference type="Proteomes" id="UP000000745">
    <property type="component" value="Chromosome"/>
</dbReference>
<dbReference type="GO" id="GO:0008883">
    <property type="term" value="F:glutamyl-tRNA reductase activity"/>
    <property type="evidence" value="ECO:0007669"/>
    <property type="project" value="UniProtKB-UniRule"/>
</dbReference>
<dbReference type="GO" id="GO:0050661">
    <property type="term" value="F:NADP binding"/>
    <property type="evidence" value="ECO:0007669"/>
    <property type="project" value="InterPro"/>
</dbReference>
<dbReference type="GO" id="GO:0019353">
    <property type="term" value="P:protoporphyrinogen IX biosynthetic process from glutamate"/>
    <property type="evidence" value="ECO:0007669"/>
    <property type="project" value="TreeGrafter"/>
</dbReference>
<dbReference type="CDD" id="cd05213">
    <property type="entry name" value="NAD_bind_Glutamyl_tRNA_reduct"/>
    <property type="match status" value="1"/>
</dbReference>
<dbReference type="FunFam" id="3.30.460.30:FF:000001">
    <property type="entry name" value="Glutamyl-tRNA reductase"/>
    <property type="match status" value="1"/>
</dbReference>
<dbReference type="FunFam" id="3.40.50.720:FF:000031">
    <property type="entry name" value="Glutamyl-tRNA reductase"/>
    <property type="match status" value="1"/>
</dbReference>
<dbReference type="Gene3D" id="3.30.460.30">
    <property type="entry name" value="Glutamyl-tRNA reductase, N-terminal domain"/>
    <property type="match status" value="1"/>
</dbReference>
<dbReference type="Gene3D" id="3.40.50.720">
    <property type="entry name" value="NAD(P)-binding Rossmann-like Domain"/>
    <property type="match status" value="1"/>
</dbReference>
<dbReference type="HAMAP" id="MF_00087">
    <property type="entry name" value="Glu_tRNA_reductase"/>
    <property type="match status" value="1"/>
</dbReference>
<dbReference type="InterPro" id="IPR000343">
    <property type="entry name" value="4pyrrol_synth_GluRdtase"/>
</dbReference>
<dbReference type="InterPro" id="IPR015896">
    <property type="entry name" value="4pyrrol_synth_GluRdtase_dimer"/>
</dbReference>
<dbReference type="InterPro" id="IPR015895">
    <property type="entry name" value="4pyrrol_synth_GluRdtase_N"/>
</dbReference>
<dbReference type="InterPro" id="IPR018214">
    <property type="entry name" value="GluRdtase_CS"/>
</dbReference>
<dbReference type="InterPro" id="IPR036453">
    <property type="entry name" value="GluRdtase_dimer_dom_sf"/>
</dbReference>
<dbReference type="InterPro" id="IPR036343">
    <property type="entry name" value="GluRdtase_N_sf"/>
</dbReference>
<dbReference type="InterPro" id="IPR036291">
    <property type="entry name" value="NAD(P)-bd_dom_sf"/>
</dbReference>
<dbReference type="InterPro" id="IPR006151">
    <property type="entry name" value="Shikm_DH/Glu-tRNA_Rdtase"/>
</dbReference>
<dbReference type="NCBIfam" id="TIGR01035">
    <property type="entry name" value="hemA"/>
    <property type="match status" value="1"/>
</dbReference>
<dbReference type="PANTHER" id="PTHR43013">
    <property type="entry name" value="GLUTAMYL-TRNA REDUCTASE"/>
    <property type="match status" value="1"/>
</dbReference>
<dbReference type="PANTHER" id="PTHR43013:SF1">
    <property type="entry name" value="GLUTAMYL-TRNA REDUCTASE"/>
    <property type="match status" value="1"/>
</dbReference>
<dbReference type="Pfam" id="PF00745">
    <property type="entry name" value="GlutR_dimer"/>
    <property type="match status" value="1"/>
</dbReference>
<dbReference type="Pfam" id="PF05201">
    <property type="entry name" value="GlutR_N"/>
    <property type="match status" value="1"/>
</dbReference>
<dbReference type="Pfam" id="PF01488">
    <property type="entry name" value="Shikimate_DH"/>
    <property type="match status" value="1"/>
</dbReference>
<dbReference type="PIRSF" id="PIRSF000445">
    <property type="entry name" value="4pyrrol_synth_GluRdtase"/>
    <property type="match status" value="1"/>
</dbReference>
<dbReference type="SUPFAM" id="SSF69742">
    <property type="entry name" value="Glutamyl tRNA-reductase catalytic, N-terminal domain"/>
    <property type="match status" value="1"/>
</dbReference>
<dbReference type="SUPFAM" id="SSF69075">
    <property type="entry name" value="Glutamyl tRNA-reductase dimerization domain"/>
    <property type="match status" value="1"/>
</dbReference>
<dbReference type="SUPFAM" id="SSF51735">
    <property type="entry name" value="NAD(P)-binding Rossmann-fold domains"/>
    <property type="match status" value="1"/>
</dbReference>
<dbReference type="PROSITE" id="PS00747">
    <property type="entry name" value="GLUTR"/>
    <property type="match status" value="1"/>
</dbReference>
<proteinExistence type="inferred from homology"/>
<protein>
    <recommendedName>
        <fullName evidence="1">Glutamyl-tRNA reductase</fullName>
        <shortName evidence="1">GluTR</shortName>
        <ecNumber evidence="1">1.2.1.70</ecNumber>
    </recommendedName>
</protein>
<comment type="function">
    <text evidence="1">Catalyzes the NADPH-dependent reduction of glutamyl-tRNA(Glu) to glutamate 1-semialdehyde (GSA).</text>
</comment>
<comment type="catalytic activity">
    <reaction evidence="1">
        <text>(S)-4-amino-5-oxopentanoate + tRNA(Glu) + NADP(+) = L-glutamyl-tRNA(Glu) + NADPH + H(+)</text>
        <dbReference type="Rhea" id="RHEA:12344"/>
        <dbReference type="Rhea" id="RHEA-COMP:9663"/>
        <dbReference type="Rhea" id="RHEA-COMP:9680"/>
        <dbReference type="ChEBI" id="CHEBI:15378"/>
        <dbReference type="ChEBI" id="CHEBI:57501"/>
        <dbReference type="ChEBI" id="CHEBI:57783"/>
        <dbReference type="ChEBI" id="CHEBI:58349"/>
        <dbReference type="ChEBI" id="CHEBI:78442"/>
        <dbReference type="ChEBI" id="CHEBI:78520"/>
        <dbReference type="EC" id="1.2.1.70"/>
    </reaction>
</comment>
<comment type="pathway">
    <text evidence="1">Porphyrin-containing compound metabolism; protoporphyrin-IX biosynthesis; 5-aminolevulinate from L-glutamyl-tRNA(Glu): step 1/2.</text>
</comment>
<comment type="subunit">
    <text evidence="1">Homodimer.</text>
</comment>
<comment type="domain">
    <text evidence="1">Possesses an unusual extended V-shaped dimeric structure with each monomer consisting of three distinct domains arranged along a curved 'spinal' alpha-helix. The N-terminal catalytic domain specifically recognizes the glutamate moiety of the substrate. The second domain is the NADPH-binding domain, and the third C-terminal domain is responsible for dimerization.</text>
</comment>
<comment type="miscellaneous">
    <text evidence="1">During catalysis, the active site Cys acts as a nucleophile attacking the alpha-carbonyl group of tRNA-bound glutamate with the formation of a thioester intermediate between enzyme and glutamate, and the concomitant release of tRNA(Glu). The thioester intermediate is finally reduced by direct hydride transfer from NADPH, to form the product GSA.</text>
</comment>
<comment type="similarity">
    <text evidence="1">Belongs to the glutamyl-tRNA reductase family.</text>
</comment>
<reference key="1">
    <citation type="journal article" date="2009" name="PLoS Genet.">
        <title>Organised genome dynamics in the Escherichia coli species results in highly diverse adaptive paths.</title>
        <authorList>
            <person name="Touchon M."/>
            <person name="Hoede C."/>
            <person name="Tenaillon O."/>
            <person name="Barbe V."/>
            <person name="Baeriswyl S."/>
            <person name="Bidet P."/>
            <person name="Bingen E."/>
            <person name="Bonacorsi S."/>
            <person name="Bouchier C."/>
            <person name="Bouvet O."/>
            <person name="Calteau A."/>
            <person name="Chiapello H."/>
            <person name="Clermont O."/>
            <person name="Cruveiller S."/>
            <person name="Danchin A."/>
            <person name="Diard M."/>
            <person name="Dossat C."/>
            <person name="Karoui M.E."/>
            <person name="Frapy E."/>
            <person name="Garry L."/>
            <person name="Ghigo J.M."/>
            <person name="Gilles A.M."/>
            <person name="Johnson J."/>
            <person name="Le Bouguenec C."/>
            <person name="Lescat M."/>
            <person name="Mangenot S."/>
            <person name="Martinez-Jehanne V."/>
            <person name="Matic I."/>
            <person name="Nassif X."/>
            <person name="Oztas S."/>
            <person name="Petit M.A."/>
            <person name="Pichon C."/>
            <person name="Rouy Z."/>
            <person name="Ruf C.S."/>
            <person name="Schneider D."/>
            <person name="Tourret J."/>
            <person name="Vacherie B."/>
            <person name="Vallenet D."/>
            <person name="Medigue C."/>
            <person name="Rocha E.P.C."/>
            <person name="Denamur E."/>
        </authorList>
    </citation>
    <scope>NUCLEOTIDE SEQUENCE [LARGE SCALE GENOMIC DNA]</scope>
    <source>
        <strain>ATCC 35469 / DSM 13698 / BCRC 15582 / CCUG 18766 / IAM 14443 / JCM 21226 / LMG 7866 / NBRC 102419 / NCTC 12128 / CDC 0568-73</strain>
    </source>
</reference>
<keyword id="KW-0521">NADP</keyword>
<keyword id="KW-0560">Oxidoreductase</keyword>
<keyword id="KW-0627">Porphyrin biosynthesis</keyword>
<feature type="chain" id="PRO_1000190529" description="Glutamyl-tRNA reductase">
    <location>
        <begin position="1"/>
        <end position="418"/>
    </location>
</feature>
<feature type="active site" description="Nucleophile" evidence="1">
    <location>
        <position position="50"/>
    </location>
</feature>
<feature type="binding site" evidence="1">
    <location>
        <begin position="49"/>
        <end position="52"/>
    </location>
    <ligand>
        <name>substrate</name>
    </ligand>
</feature>
<feature type="binding site" evidence="1">
    <location>
        <position position="109"/>
    </location>
    <ligand>
        <name>substrate</name>
    </ligand>
</feature>
<feature type="binding site" evidence="1">
    <location>
        <begin position="114"/>
        <end position="116"/>
    </location>
    <ligand>
        <name>substrate</name>
    </ligand>
</feature>
<feature type="binding site" evidence="1">
    <location>
        <position position="120"/>
    </location>
    <ligand>
        <name>substrate</name>
    </ligand>
</feature>
<feature type="binding site" evidence="1">
    <location>
        <begin position="189"/>
        <end position="194"/>
    </location>
    <ligand>
        <name>NADP(+)</name>
        <dbReference type="ChEBI" id="CHEBI:58349"/>
    </ligand>
</feature>
<feature type="site" description="Important for activity" evidence="1">
    <location>
        <position position="99"/>
    </location>
</feature>
<accession>B7LSI0</accession>
<sequence length="418" mass="46346">MTLLALGINHKTAPVSLRERVSFSPDKLDQALDSLLAQPMVQGGVVLSTCNRTELYLSVEEQDNLQEALIRWLCDYHNLNEEDLRKSLYWHQDNDAVSHLMRVASGLDSLVLGEPQILGQVKKAFADSQKGHMKASELERMFQKSFSVAKRVRTETDIGASAVSVAFAACTLARQIFESLSTVTVLLVGAGETIELVARHLREHKVQKMIIANRTRERAQILADEVGAEVIALSDIDERLREADIIISSTASPLPIIGKGMVERALKSRRNQPMLLVDIAVPRDVEPEVGKLANAYLYSVDDLQSIISHNLAQRKAAAVEAETIVAQETSEFMSWLRAQSASETIREYRSQAEHIRDELTAKALAALEQGGDAQAIMQDLAWKLTNRLIHAPTKSLQQAARDGDNERLNILRDSLGLE</sequence>
<name>HEM1_ESCF3</name>
<gene>
    <name evidence="1" type="primary">hemA</name>
    <name type="ordered locus">EFER_1751</name>
</gene>
<organism>
    <name type="scientific">Escherichia fergusonii (strain ATCC 35469 / DSM 13698 / CCUG 18766 / IAM 14443 / JCM 21226 / LMG 7866 / NBRC 102419 / NCTC 12128 / CDC 0568-73)</name>
    <dbReference type="NCBI Taxonomy" id="585054"/>
    <lineage>
        <taxon>Bacteria</taxon>
        <taxon>Pseudomonadati</taxon>
        <taxon>Pseudomonadota</taxon>
        <taxon>Gammaproteobacteria</taxon>
        <taxon>Enterobacterales</taxon>
        <taxon>Enterobacteriaceae</taxon>
        <taxon>Escherichia</taxon>
    </lineage>
</organism>